<proteinExistence type="inferred from homology"/>
<sequence>MSKEIKFGNDSRSKMLNGVNILADAVKITLGPKGRNVVIDKSYGAPQITKDGVTVAKEIELEDKFENMGAQMVKDVASQTNDAAGDGTTTATVLAQAIIADGLKAVAAGMNPMDLKRGIDQTVKAAVAELKKLSTPCSDSKAITQVGTISANSDHEIGEIIARAMQKVGNQGVITVEEGQGLETELDVVEGMQFDRGYLSPYFMTNHESGTVELENPYILLVDKKIGNIRELLPTLEAVAKASKPLLIIAEDVEGEALATLVVNNMRGIVKVCAVKAPGFGDRRKAMLQDIATLTGGTVISEEIGLDMEKVQLEDLGQAKRIVINKDETTIIDGIGDESVINARVSQIKQQIEASTSDYDKEKLQERSAKLAGGVAVIKVGASTEVEMKEKKDRVDDALHATRAAVEEGVVAGGGVALVRVAAILKGLTGENEDQNVGIRVALRAMEAPLRQIVENCGEEASVVANNVRQGEGNYGYNATTGEYGDMLEMGIIDPTKVARSALQFAASVAALMITTECMITDRPVAASAAAPDMGGMGGMGGMM</sequence>
<evidence type="ECO:0000255" key="1">
    <source>
        <dbReference type="HAMAP-Rule" id="MF_00600"/>
    </source>
</evidence>
<reference key="1">
    <citation type="journal article" date="2008" name="BMC Genomics">
        <title>Genomics of an extreme psychrophile, Psychromonas ingrahamii.</title>
        <authorList>
            <person name="Riley M."/>
            <person name="Staley J.T."/>
            <person name="Danchin A."/>
            <person name="Wang T.Z."/>
            <person name="Brettin T.S."/>
            <person name="Hauser L.J."/>
            <person name="Land M.L."/>
            <person name="Thompson L.S."/>
        </authorList>
    </citation>
    <scope>NUCLEOTIDE SEQUENCE [LARGE SCALE GENOMIC DNA]</scope>
    <source>
        <strain>DSM 17664 / CCUG 51855 / 37</strain>
    </source>
</reference>
<organism>
    <name type="scientific">Psychromonas ingrahamii (strain DSM 17664 / CCUG 51855 / 37)</name>
    <dbReference type="NCBI Taxonomy" id="357804"/>
    <lineage>
        <taxon>Bacteria</taxon>
        <taxon>Pseudomonadati</taxon>
        <taxon>Pseudomonadota</taxon>
        <taxon>Gammaproteobacteria</taxon>
        <taxon>Alteromonadales</taxon>
        <taxon>Psychromonadaceae</taxon>
        <taxon>Psychromonas</taxon>
    </lineage>
</organism>
<dbReference type="EC" id="5.6.1.7" evidence="1"/>
<dbReference type="EMBL" id="CP000510">
    <property type="protein sequence ID" value="ABM04219.1"/>
    <property type="molecule type" value="Genomic_DNA"/>
</dbReference>
<dbReference type="RefSeq" id="WP_011770779.1">
    <property type="nucleotide sequence ID" value="NC_008709.1"/>
</dbReference>
<dbReference type="SMR" id="A1SXK4"/>
<dbReference type="STRING" id="357804.Ping_2493"/>
<dbReference type="KEGG" id="pin:Ping_2493"/>
<dbReference type="eggNOG" id="COG0459">
    <property type="taxonomic scope" value="Bacteria"/>
</dbReference>
<dbReference type="HOGENOM" id="CLU_016503_3_0_6"/>
<dbReference type="Proteomes" id="UP000000639">
    <property type="component" value="Chromosome"/>
</dbReference>
<dbReference type="GO" id="GO:0005737">
    <property type="term" value="C:cytoplasm"/>
    <property type="evidence" value="ECO:0007669"/>
    <property type="project" value="UniProtKB-SubCell"/>
</dbReference>
<dbReference type="GO" id="GO:0005524">
    <property type="term" value="F:ATP binding"/>
    <property type="evidence" value="ECO:0007669"/>
    <property type="project" value="UniProtKB-UniRule"/>
</dbReference>
<dbReference type="GO" id="GO:0140662">
    <property type="term" value="F:ATP-dependent protein folding chaperone"/>
    <property type="evidence" value="ECO:0007669"/>
    <property type="project" value="InterPro"/>
</dbReference>
<dbReference type="GO" id="GO:0016853">
    <property type="term" value="F:isomerase activity"/>
    <property type="evidence" value="ECO:0007669"/>
    <property type="project" value="UniProtKB-KW"/>
</dbReference>
<dbReference type="GO" id="GO:0051082">
    <property type="term" value="F:unfolded protein binding"/>
    <property type="evidence" value="ECO:0007669"/>
    <property type="project" value="UniProtKB-UniRule"/>
</dbReference>
<dbReference type="GO" id="GO:0042026">
    <property type="term" value="P:protein refolding"/>
    <property type="evidence" value="ECO:0007669"/>
    <property type="project" value="UniProtKB-UniRule"/>
</dbReference>
<dbReference type="CDD" id="cd03344">
    <property type="entry name" value="GroEL"/>
    <property type="match status" value="1"/>
</dbReference>
<dbReference type="FunFam" id="1.10.560.10:FF:000001">
    <property type="entry name" value="60 kDa chaperonin"/>
    <property type="match status" value="1"/>
</dbReference>
<dbReference type="FunFam" id="3.50.7.10:FF:000001">
    <property type="entry name" value="60 kDa chaperonin"/>
    <property type="match status" value="1"/>
</dbReference>
<dbReference type="Gene3D" id="3.50.7.10">
    <property type="entry name" value="GroEL"/>
    <property type="match status" value="1"/>
</dbReference>
<dbReference type="Gene3D" id="1.10.560.10">
    <property type="entry name" value="GroEL-like equatorial domain"/>
    <property type="match status" value="1"/>
</dbReference>
<dbReference type="Gene3D" id="3.30.260.10">
    <property type="entry name" value="TCP-1-like chaperonin intermediate domain"/>
    <property type="match status" value="1"/>
</dbReference>
<dbReference type="HAMAP" id="MF_00600">
    <property type="entry name" value="CH60"/>
    <property type="match status" value="1"/>
</dbReference>
<dbReference type="InterPro" id="IPR018370">
    <property type="entry name" value="Chaperonin_Cpn60_CS"/>
</dbReference>
<dbReference type="InterPro" id="IPR001844">
    <property type="entry name" value="Cpn60/GroEL"/>
</dbReference>
<dbReference type="InterPro" id="IPR002423">
    <property type="entry name" value="Cpn60/GroEL/TCP-1"/>
</dbReference>
<dbReference type="InterPro" id="IPR027409">
    <property type="entry name" value="GroEL-like_apical_dom_sf"/>
</dbReference>
<dbReference type="InterPro" id="IPR027413">
    <property type="entry name" value="GROEL-like_equatorial_sf"/>
</dbReference>
<dbReference type="InterPro" id="IPR027410">
    <property type="entry name" value="TCP-1-like_intermed_sf"/>
</dbReference>
<dbReference type="NCBIfam" id="TIGR02348">
    <property type="entry name" value="GroEL"/>
    <property type="match status" value="1"/>
</dbReference>
<dbReference type="NCBIfam" id="NF000592">
    <property type="entry name" value="PRK00013.1"/>
    <property type="match status" value="1"/>
</dbReference>
<dbReference type="NCBIfam" id="NF009487">
    <property type="entry name" value="PRK12849.1"/>
    <property type="match status" value="1"/>
</dbReference>
<dbReference type="NCBIfam" id="NF009488">
    <property type="entry name" value="PRK12850.1"/>
    <property type="match status" value="1"/>
</dbReference>
<dbReference type="NCBIfam" id="NF009489">
    <property type="entry name" value="PRK12851.1"/>
    <property type="match status" value="1"/>
</dbReference>
<dbReference type="PANTHER" id="PTHR45633">
    <property type="entry name" value="60 KDA HEAT SHOCK PROTEIN, MITOCHONDRIAL"/>
    <property type="match status" value="1"/>
</dbReference>
<dbReference type="Pfam" id="PF00118">
    <property type="entry name" value="Cpn60_TCP1"/>
    <property type="match status" value="1"/>
</dbReference>
<dbReference type="PRINTS" id="PR00298">
    <property type="entry name" value="CHAPERONIN60"/>
</dbReference>
<dbReference type="SUPFAM" id="SSF52029">
    <property type="entry name" value="GroEL apical domain-like"/>
    <property type="match status" value="1"/>
</dbReference>
<dbReference type="SUPFAM" id="SSF48592">
    <property type="entry name" value="GroEL equatorial domain-like"/>
    <property type="match status" value="1"/>
</dbReference>
<dbReference type="SUPFAM" id="SSF54849">
    <property type="entry name" value="GroEL-intermediate domain like"/>
    <property type="match status" value="1"/>
</dbReference>
<dbReference type="PROSITE" id="PS00296">
    <property type="entry name" value="CHAPERONINS_CPN60"/>
    <property type="match status" value="1"/>
</dbReference>
<comment type="function">
    <text evidence="1">Together with its co-chaperonin GroES, plays an essential role in assisting protein folding. The GroEL-GroES system forms a nano-cage that allows encapsulation of the non-native substrate proteins and provides a physical environment optimized to promote and accelerate protein folding.</text>
</comment>
<comment type="catalytic activity">
    <reaction evidence="1">
        <text>ATP + H2O + a folded polypeptide = ADP + phosphate + an unfolded polypeptide.</text>
        <dbReference type="EC" id="5.6.1.7"/>
    </reaction>
</comment>
<comment type="subunit">
    <text evidence="1">Forms a cylinder of 14 subunits composed of two heptameric rings stacked back-to-back. Interacts with the co-chaperonin GroES.</text>
</comment>
<comment type="subcellular location">
    <subcellularLocation>
        <location evidence="1">Cytoplasm</location>
    </subcellularLocation>
</comment>
<comment type="similarity">
    <text evidence="1">Belongs to the chaperonin (HSP60) family.</text>
</comment>
<accession>A1SXK4</accession>
<name>CH602_PSYIN</name>
<feature type="chain" id="PRO_0000332052" description="Chaperonin GroEL 2">
    <location>
        <begin position="1"/>
        <end position="544"/>
    </location>
</feature>
<feature type="binding site" evidence="1">
    <location>
        <begin position="29"/>
        <end position="32"/>
    </location>
    <ligand>
        <name>ATP</name>
        <dbReference type="ChEBI" id="CHEBI:30616"/>
    </ligand>
</feature>
<feature type="binding site" evidence="1">
    <location>
        <position position="50"/>
    </location>
    <ligand>
        <name>ATP</name>
        <dbReference type="ChEBI" id="CHEBI:30616"/>
    </ligand>
</feature>
<feature type="binding site" evidence="1">
    <location>
        <begin position="86"/>
        <end position="90"/>
    </location>
    <ligand>
        <name>ATP</name>
        <dbReference type="ChEBI" id="CHEBI:30616"/>
    </ligand>
</feature>
<feature type="binding site" evidence="1">
    <location>
        <position position="414"/>
    </location>
    <ligand>
        <name>ATP</name>
        <dbReference type="ChEBI" id="CHEBI:30616"/>
    </ligand>
</feature>
<feature type="binding site" evidence="1">
    <location>
        <position position="494"/>
    </location>
    <ligand>
        <name>ATP</name>
        <dbReference type="ChEBI" id="CHEBI:30616"/>
    </ligand>
</feature>
<gene>
    <name evidence="1" type="primary">groEL2</name>
    <name evidence="1" type="synonym">groL2</name>
    <name type="ordered locus">Ping_2493</name>
</gene>
<protein>
    <recommendedName>
        <fullName evidence="1">Chaperonin GroEL 2</fullName>
        <ecNumber evidence="1">5.6.1.7</ecNumber>
    </recommendedName>
    <alternativeName>
        <fullName evidence="1">60 kDa chaperonin 2</fullName>
    </alternativeName>
    <alternativeName>
        <fullName evidence="1">Chaperonin-60 2</fullName>
        <shortName evidence="1">Cpn60 2</shortName>
    </alternativeName>
</protein>
<keyword id="KW-0067">ATP-binding</keyword>
<keyword id="KW-0143">Chaperone</keyword>
<keyword id="KW-0963">Cytoplasm</keyword>
<keyword id="KW-0413">Isomerase</keyword>
<keyword id="KW-0547">Nucleotide-binding</keyword>
<keyword id="KW-1185">Reference proteome</keyword>